<sequence length="767" mass="86372">MSLGRLLRRASSKASDLLTLTPGGSGSGSPSVLDGEIIYSKNNVCVHPPEGLQGLGEHHPGYLCLYMEKDEMLGATLILAWVPNSRIQRQDEEALRYITPESSPVRKAPRPRGRRTRSSGASHQPSPTELRPTLTPKDEDILVVAQSVPDRMLASPAPEDEEKLAQGLGVDGAQPASQPACSPSGILSTVSPQDVTEEGREPRPEAGEEDGSLELSAEGVSRDSSFDSDSDTFSSPFCLSPISAALAESRGSVFLESDSSPPSSSDAGLRFPDSNGLLQTPRWDEPQRVCALEQICGVFRVDLGHMRSLRLFFSDEACTSGQLVVASRESQYKVFHFHHGGLDKLSDVFQQWKYCTEMQLKDQQVAPDKTCMQFSIRRPKLPSSETHPEESMYKRLGVSAWLNHLNELGQVEEEYKLRKAIFFGGIDVSIRGEVWPFLLRYYSHESTSEEREALRLQKRKEYSEIQQKRLSMTPEEHRAFWRNVQFTVDKDVVRTDRNNQFFRGEDNPNVESMRRILLNYAVYNPAVGYSQGMSDLVAPILAEVLDESDTFWCFVGLMQNTIFVSSPRDEDMEKQLLYLRELLRLTHVRFYQHLVSLGEDGLQMLFCHRWLLLCFKREFPEAEALRIWEACWAHYQTDYFHLFICVAIVAIYGDDVIEQQLATDQMLLHFGNLAMHMNGELVLRKARSLLYQFRLLPRIPCSLHDLCKLCGSGMWDSGSMPAVECTGHHPGSESCPYGGTVEMPSPKSLREGKKGPKTPQDGFGFRR</sequence>
<organism>
    <name type="scientific">Homo sapiens</name>
    <name type="common">Human</name>
    <dbReference type="NCBI Taxonomy" id="9606"/>
    <lineage>
        <taxon>Eukaryota</taxon>
        <taxon>Metazoa</taxon>
        <taxon>Chordata</taxon>
        <taxon>Craniata</taxon>
        <taxon>Vertebrata</taxon>
        <taxon>Euteleostomi</taxon>
        <taxon>Mammalia</taxon>
        <taxon>Eutheria</taxon>
        <taxon>Euarchontoglires</taxon>
        <taxon>Primates</taxon>
        <taxon>Haplorrhini</taxon>
        <taxon>Catarrhini</taxon>
        <taxon>Hominidae</taxon>
        <taxon>Homo</taxon>
    </lineage>
</organism>
<name>TBC16_HUMAN</name>
<dbReference type="EMBL" id="AB449902">
    <property type="protein sequence ID" value="BAH16645.1"/>
    <property type="molecule type" value="mRNA"/>
</dbReference>
<dbReference type="EMBL" id="AC100791">
    <property type="status" value="NOT_ANNOTATED_CDS"/>
    <property type="molecule type" value="Genomic_DNA"/>
</dbReference>
<dbReference type="EMBL" id="AC116025">
    <property type="status" value="NOT_ANNOTATED_CDS"/>
    <property type="molecule type" value="Genomic_DNA"/>
</dbReference>
<dbReference type="EMBL" id="CH471099">
    <property type="protein sequence ID" value="EAW89575.1"/>
    <property type="molecule type" value="Genomic_DNA"/>
</dbReference>
<dbReference type="EMBL" id="CH471099">
    <property type="protein sequence ID" value="EAW89576.1"/>
    <property type="molecule type" value="Genomic_DNA"/>
</dbReference>
<dbReference type="EMBL" id="BC001525">
    <property type="protein sequence ID" value="AAH01525.2"/>
    <property type="status" value="ALT_INIT"/>
    <property type="molecule type" value="mRNA"/>
</dbReference>
<dbReference type="EMBL" id="BC028290">
    <property type="protein sequence ID" value="AAH28290.1"/>
    <property type="molecule type" value="mRNA"/>
</dbReference>
<dbReference type="EMBL" id="BC036947">
    <property type="protein sequence ID" value="AAH36947.1"/>
    <property type="molecule type" value="mRNA"/>
</dbReference>
<dbReference type="CCDS" id="CCDS11766.1">
    <molecule id="Q8TBP0-1"/>
</dbReference>
<dbReference type="CCDS" id="CCDS62351.1">
    <molecule id="Q8TBP0-2"/>
</dbReference>
<dbReference type="CCDS" id="CCDS62352.1">
    <molecule id="Q8TBP0-3"/>
</dbReference>
<dbReference type="CCDS" id="CCDS62353.1">
    <molecule id="Q8TBP0-4"/>
</dbReference>
<dbReference type="RefSeq" id="NP_001258773.1">
    <molecule id="Q8TBP0-4"/>
    <property type="nucleotide sequence ID" value="NM_001271844.2"/>
</dbReference>
<dbReference type="RefSeq" id="NP_001258774.1">
    <molecule id="Q8TBP0-2"/>
    <property type="nucleotide sequence ID" value="NM_001271845.2"/>
</dbReference>
<dbReference type="RefSeq" id="NP_001258775.1">
    <molecule id="Q8TBP0-3"/>
    <property type="nucleotide sequence ID" value="NM_001271846.2"/>
</dbReference>
<dbReference type="RefSeq" id="NP_061893.2">
    <molecule id="Q8TBP0-1"/>
    <property type="nucleotide sequence ID" value="NM_019020.3"/>
</dbReference>
<dbReference type="RefSeq" id="XP_005257106.1">
    <property type="nucleotide sequence ID" value="XM_005257049.2"/>
</dbReference>
<dbReference type="RefSeq" id="XP_006721757.1">
    <molecule id="Q8TBP0-1"/>
    <property type="nucleotide sequence ID" value="XM_006721694.4"/>
</dbReference>
<dbReference type="RefSeq" id="XP_047291298.1">
    <molecule id="Q8TBP0-1"/>
    <property type="nucleotide sequence ID" value="XM_047435342.1"/>
</dbReference>
<dbReference type="RefSeq" id="XP_054171028.1">
    <molecule id="Q8TBP0-1"/>
    <property type="nucleotide sequence ID" value="XM_054315053.1"/>
</dbReference>
<dbReference type="RefSeq" id="XP_054171029.1">
    <molecule id="Q8TBP0-1"/>
    <property type="nucleotide sequence ID" value="XM_054315054.1"/>
</dbReference>
<dbReference type="SMR" id="Q8TBP0"/>
<dbReference type="BioGRID" id="125913">
    <property type="interactions" value="29"/>
</dbReference>
<dbReference type="FunCoup" id="Q8TBP0">
    <property type="interactions" value="299"/>
</dbReference>
<dbReference type="IntAct" id="Q8TBP0">
    <property type="interactions" value="8"/>
</dbReference>
<dbReference type="STRING" id="9606.ENSP00000309794"/>
<dbReference type="iPTMnet" id="Q8TBP0"/>
<dbReference type="PhosphoSitePlus" id="Q8TBP0"/>
<dbReference type="BioMuta" id="TBC1D16"/>
<dbReference type="DMDM" id="59798967"/>
<dbReference type="jPOST" id="Q8TBP0"/>
<dbReference type="MassIVE" id="Q8TBP0"/>
<dbReference type="PaxDb" id="9606-ENSP00000309794"/>
<dbReference type="PeptideAtlas" id="Q8TBP0"/>
<dbReference type="ProteomicsDB" id="46613"/>
<dbReference type="ProteomicsDB" id="47595"/>
<dbReference type="ProteomicsDB" id="71856"/>
<dbReference type="ProteomicsDB" id="74035">
    <molecule id="Q8TBP0-1"/>
</dbReference>
<dbReference type="Antibodypedia" id="19757">
    <property type="antibodies" value="65 antibodies from 19 providers"/>
</dbReference>
<dbReference type="DNASU" id="125058"/>
<dbReference type="Ensembl" id="ENST00000310924.7">
    <molecule id="Q8TBP0-1"/>
    <property type="protein sequence ID" value="ENSP00000309794.2"/>
    <property type="gene ID" value="ENSG00000167291.16"/>
</dbReference>
<dbReference type="Ensembl" id="ENST00000340848.11">
    <molecule id="Q8TBP0-2"/>
    <property type="protein sequence ID" value="ENSP00000341517.7"/>
    <property type="gene ID" value="ENSG00000167291.16"/>
</dbReference>
<dbReference type="Ensembl" id="ENST00000572862.5">
    <molecule id="Q8TBP0-3"/>
    <property type="protein sequence ID" value="ENSP00000458766.1"/>
    <property type="gene ID" value="ENSG00000167291.16"/>
</dbReference>
<dbReference type="Ensembl" id="ENST00000576768.5">
    <molecule id="Q8TBP0-4"/>
    <property type="protein sequence ID" value="ENSP00000461522.1"/>
    <property type="gene ID" value="ENSG00000167291.16"/>
</dbReference>
<dbReference type="GeneID" id="125058"/>
<dbReference type="KEGG" id="hsa:125058"/>
<dbReference type="MANE-Select" id="ENST00000310924.7">
    <property type="protein sequence ID" value="ENSP00000309794.2"/>
    <property type="RefSeq nucleotide sequence ID" value="NM_019020.4"/>
    <property type="RefSeq protein sequence ID" value="NP_061893.2"/>
</dbReference>
<dbReference type="UCSC" id="uc002jxg.3">
    <molecule id="Q8TBP0-1"/>
    <property type="organism name" value="human"/>
</dbReference>
<dbReference type="AGR" id="HGNC:28356"/>
<dbReference type="CTD" id="125058"/>
<dbReference type="DisGeNET" id="125058"/>
<dbReference type="GeneCards" id="TBC1D16"/>
<dbReference type="HGNC" id="HGNC:28356">
    <property type="gene designation" value="TBC1D16"/>
</dbReference>
<dbReference type="HPA" id="ENSG00000167291">
    <property type="expression patterns" value="Low tissue specificity"/>
</dbReference>
<dbReference type="MIM" id="616637">
    <property type="type" value="gene"/>
</dbReference>
<dbReference type="neXtProt" id="NX_Q8TBP0"/>
<dbReference type="OpenTargets" id="ENSG00000167291"/>
<dbReference type="PharmGKB" id="PA134881634"/>
<dbReference type="VEuPathDB" id="HostDB:ENSG00000167291"/>
<dbReference type="eggNOG" id="KOG2224">
    <property type="taxonomic scope" value="Eukaryota"/>
</dbReference>
<dbReference type="GeneTree" id="ENSGT00940000158541"/>
<dbReference type="HOGENOM" id="CLU_013545_0_0_1"/>
<dbReference type="InParanoid" id="Q8TBP0"/>
<dbReference type="OMA" id="EHKEFWR"/>
<dbReference type="OrthoDB" id="10264062at2759"/>
<dbReference type="PAN-GO" id="Q8TBP0">
    <property type="GO annotations" value="3 GO annotations based on evolutionary models"/>
</dbReference>
<dbReference type="PhylomeDB" id="Q8TBP0"/>
<dbReference type="TreeFam" id="TF314212"/>
<dbReference type="PathwayCommons" id="Q8TBP0"/>
<dbReference type="Reactome" id="R-HSA-8854214">
    <property type="pathway name" value="TBC/RABGAPs"/>
</dbReference>
<dbReference type="SignaLink" id="Q8TBP0"/>
<dbReference type="BioGRID-ORCS" id="125058">
    <property type="hits" value="27 hits in 1149 CRISPR screens"/>
</dbReference>
<dbReference type="ChiTaRS" id="TBC1D16">
    <property type="organism name" value="human"/>
</dbReference>
<dbReference type="GenomeRNAi" id="125058"/>
<dbReference type="Pharos" id="Q8TBP0">
    <property type="development level" value="Tbio"/>
</dbReference>
<dbReference type="PRO" id="PR:Q8TBP0"/>
<dbReference type="Proteomes" id="UP000005640">
    <property type="component" value="Chromosome 17"/>
</dbReference>
<dbReference type="RNAct" id="Q8TBP0">
    <property type="molecule type" value="protein"/>
</dbReference>
<dbReference type="Bgee" id="ENSG00000167291">
    <property type="expression patterns" value="Expressed in parotid gland and 182 other cell types or tissues"/>
</dbReference>
<dbReference type="ExpressionAtlas" id="Q8TBP0">
    <property type="expression patterns" value="baseline and differential"/>
</dbReference>
<dbReference type="GO" id="GO:0005829">
    <property type="term" value="C:cytosol"/>
    <property type="evidence" value="ECO:0000314"/>
    <property type="project" value="UniProtKB"/>
</dbReference>
<dbReference type="GO" id="GO:0005769">
    <property type="term" value="C:early endosome"/>
    <property type="evidence" value="ECO:0000314"/>
    <property type="project" value="UniProtKB"/>
</dbReference>
<dbReference type="GO" id="GO:0005096">
    <property type="term" value="F:GTPase activator activity"/>
    <property type="evidence" value="ECO:0000314"/>
    <property type="project" value="UniProtKB"/>
</dbReference>
<dbReference type="GO" id="GO:0001919">
    <property type="term" value="P:regulation of receptor recycling"/>
    <property type="evidence" value="ECO:0000314"/>
    <property type="project" value="UniProtKB"/>
</dbReference>
<dbReference type="FunFam" id="1.10.8.270:FF:000017">
    <property type="entry name" value="TBC1 domain family member 16"/>
    <property type="match status" value="1"/>
</dbReference>
<dbReference type="FunFam" id="2.30.29.230:FF:000002">
    <property type="entry name" value="TBC1 domain family member 16 isoform X2"/>
    <property type="match status" value="1"/>
</dbReference>
<dbReference type="FunFam" id="1.10.472.80:FF:000020">
    <property type="entry name" value="TBC1 domain family, member 16"/>
    <property type="match status" value="1"/>
</dbReference>
<dbReference type="Gene3D" id="2.30.29.230">
    <property type="match status" value="1"/>
</dbReference>
<dbReference type="Gene3D" id="1.10.8.270">
    <property type="entry name" value="putative rabgap domain of human tbc1 domain family member 14 like domains"/>
    <property type="match status" value="1"/>
</dbReference>
<dbReference type="Gene3D" id="1.10.472.80">
    <property type="entry name" value="Ypt/Rab-GAP domain of gyp1p, domain 3"/>
    <property type="match status" value="1"/>
</dbReference>
<dbReference type="InterPro" id="IPR000195">
    <property type="entry name" value="Rab-GAP-TBC_dom"/>
</dbReference>
<dbReference type="InterPro" id="IPR035969">
    <property type="entry name" value="Rab-GAP_TBC_sf"/>
</dbReference>
<dbReference type="PANTHER" id="PTHR22957:SF547">
    <property type="entry name" value="TBC1 DOMAIN FAMILY MEMBER 16"/>
    <property type="match status" value="1"/>
</dbReference>
<dbReference type="PANTHER" id="PTHR22957">
    <property type="entry name" value="TBC1 DOMAIN FAMILY MEMBER GTPASE-ACTIVATING PROTEIN"/>
    <property type="match status" value="1"/>
</dbReference>
<dbReference type="Pfam" id="PF00566">
    <property type="entry name" value="RabGAP-TBC"/>
    <property type="match status" value="1"/>
</dbReference>
<dbReference type="SMART" id="SM00164">
    <property type="entry name" value="TBC"/>
    <property type="match status" value="1"/>
</dbReference>
<dbReference type="SUPFAM" id="SSF47923">
    <property type="entry name" value="Ypt/Rab-GAP domain of gyp1p"/>
    <property type="match status" value="2"/>
</dbReference>
<dbReference type="PROSITE" id="PS50086">
    <property type="entry name" value="TBC_RABGAP"/>
    <property type="match status" value="1"/>
</dbReference>
<feature type="chain" id="PRO_0000208044" description="TBC1 domain family member 16">
    <location>
        <begin position="1"/>
        <end position="767"/>
    </location>
</feature>
<feature type="domain" description="Rab-GAP TBC" evidence="1">
    <location>
        <begin position="425"/>
        <end position="635"/>
    </location>
</feature>
<feature type="region of interest" description="Disordered" evidence="2">
    <location>
        <begin position="93"/>
        <end position="138"/>
    </location>
</feature>
<feature type="region of interest" description="Disordered" evidence="2">
    <location>
        <begin position="169"/>
        <end position="228"/>
    </location>
</feature>
<feature type="region of interest" description="Disordered" evidence="2">
    <location>
        <begin position="729"/>
        <end position="767"/>
    </location>
</feature>
<feature type="compositionally biased region" description="Basic residues" evidence="2">
    <location>
        <begin position="107"/>
        <end position="117"/>
    </location>
</feature>
<feature type="compositionally biased region" description="Polar residues" evidence="2">
    <location>
        <begin position="175"/>
        <end position="194"/>
    </location>
</feature>
<feature type="compositionally biased region" description="Basic and acidic residues" evidence="2">
    <location>
        <begin position="197"/>
        <end position="206"/>
    </location>
</feature>
<feature type="splice variant" id="VSP_055665" description="In isoform 3." evidence="3">
    <original>MSLGRLLRRASSKASDLLTLTPGGSGSGSPSVLDGEIIYSKNNVCVHPPEGLQGLGEHHPGYLCLYMEKDEMLGATLILAWVPNSRIQRQDEEALRYITPESSPVRKAPRPRGRRTRSSGASHQPSPTELRPTLTPKDEDILVVAQSVPDRMLASPAPEDEEKLAQGLGVDGAQPASQPACSPSGILSTVSPQDVTEEGREPRPEAGEEDGSLELSAEGVSRDSSFDSDSDTFSSPFCLSPISAALAESRGSVFLESDSSPPSSSDAGLRFPDSNGLLQTPRWDEPQRVCALEQICGVFRVDLGHMRSLRLFFSDEACTSGQLVVASRESQYKVFHFHHGGLDKLSDVFQQWKYCTEMQLKDQQ</original>
    <variation>MK</variation>
    <location>
        <begin position="1"/>
        <end position="364"/>
    </location>
</feature>
<feature type="splice variant" id="VSP_055666" description="In isoform 4." evidence="4">
    <original>MSLGRLLRRASSKASDLLTLTPGGSGSGSPSVLDGEIIYSKNNVCVHPPEGLQGLGEHHPGYLCLYMEKDEMLGATLILAWVPNSRIQRQDEEALRYITPESSPVRKAPRPRGRRTRSSGASHQPSPTELRPTLTPKDEDILVVAQSVPDRMLASPAPEDEEKLAQGLGVDGAQPASQPACSPSGILSTVSPQDVTEEGREPRPEAGEEDGSLELSAEGVSRDSSFDSDSDTFSSPFCLSPISAALAESRGSVFLESDSSPPSSSDAGLRFPDSNGLLQTPRWDEPQRVCALEQICGVFRVDLGHMRSLRLFFSDEACTSGQLVVASRESQYKVFHFHHGGLDKLSDVFQQWKYCTEMQLKDQ</original>
    <variation>MK</variation>
    <location>
        <begin position="1"/>
        <end position="363"/>
    </location>
</feature>
<feature type="splice variant" id="VSP_053995" description="In isoform 2." evidence="3">
    <original>MS</original>
    <variation>MK</variation>
    <location>
        <begin position="1"/>
        <end position="2"/>
    </location>
</feature>
<feature type="splice variant" id="VSP_053996" description="In isoform 2." evidence="3">
    <location>
        <begin position="3"/>
        <end position="364"/>
    </location>
</feature>
<feature type="splice variant" id="VSP_055667" description="In isoform 4." evidence="4">
    <location>
        <begin position="420"/>
        <end position="433"/>
    </location>
</feature>
<feature type="splice variant" id="VSP_055668" description="In isoform 3." evidence="3">
    <original>TDYFHLFICVAIVAIYGDDVIEQQLATDQMLLHFGNLAMHMNGELVLRKARSLLYQFRLLPRIPCSLHDLCKLCGSGMWDSGSMPAVECTGHHPGSESCPYGGTVEMPSPKSLREGKKGPKTPQDGFGFRR</original>
    <variation>GADV</variation>
    <location>
        <begin position="637"/>
        <end position="767"/>
    </location>
</feature>
<feature type="sequence variant" id="VAR_052542" description="In dbSNP:rs34845477.">
    <original>E</original>
    <variation>K</variation>
    <location>
        <position position="476"/>
    </location>
</feature>
<reference key="1">
    <citation type="journal article" date="2009" name="Genes Cells">
        <title>Identification and characterization of a novel Tre-2/Bub2/Cdc16 (TBC) protein that possesses Rab3A-GAP activity.</title>
        <authorList>
            <person name="Ishibashi K."/>
            <person name="Kanno E."/>
            <person name="Itoh T."/>
            <person name="Fukuda M."/>
        </authorList>
    </citation>
    <scope>NUCLEOTIDE SEQUENCE [MRNA] (ISOFORM 1)</scope>
    <source>
        <tissue>Brain</tissue>
    </source>
</reference>
<reference key="2">
    <citation type="journal article" date="2006" name="Nature">
        <title>DNA sequence of human chromosome 17 and analysis of rearrangement in the human lineage.</title>
        <authorList>
            <person name="Zody M.C."/>
            <person name="Garber M."/>
            <person name="Adams D.J."/>
            <person name="Sharpe T."/>
            <person name="Harrow J."/>
            <person name="Lupski J.R."/>
            <person name="Nicholson C."/>
            <person name="Searle S.M."/>
            <person name="Wilming L."/>
            <person name="Young S.K."/>
            <person name="Abouelleil A."/>
            <person name="Allen N.R."/>
            <person name="Bi W."/>
            <person name="Bloom T."/>
            <person name="Borowsky M.L."/>
            <person name="Bugalter B.E."/>
            <person name="Butler J."/>
            <person name="Chang J.L."/>
            <person name="Chen C.-K."/>
            <person name="Cook A."/>
            <person name="Corum B."/>
            <person name="Cuomo C.A."/>
            <person name="de Jong P.J."/>
            <person name="DeCaprio D."/>
            <person name="Dewar K."/>
            <person name="FitzGerald M."/>
            <person name="Gilbert J."/>
            <person name="Gibson R."/>
            <person name="Gnerre S."/>
            <person name="Goldstein S."/>
            <person name="Grafham D.V."/>
            <person name="Grocock R."/>
            <person name="Hafez N."/>
            <person name="Hagopian D.S."/>
            <person name="Hart E."/>
            <person name="Norman C.H."/>
            <person name="Humphray S."/>
            <person name="Jaffe D.B."/>
            <person name="Jones M."/>
            <person name="Kamal M."/>
            <person name="Khodiyar V.K."/>
            <person name="LaButti K."/>
            <person name="Laird G."/>
            <person name="Lehoczky J."/>
            <person name="Liu X."/>
            <person name="Lokyitsang T."/>
            <person name="Loveland J."/>
            <person name="Lui A."/>
            <person name="Macdonald P."/>
            <person name="Major J.E."/>
            <person name="Matthews L."/>
            <person name="Mauceli E."/>
            <person name="McCarroll S.A."/>
            <person name="Mihalev A.H."/>
            <person name="Mudge J."/>
            <person name="Nguyen C."/>
            <person name="Nicol R."/>
            <person name="O'Leary S.B."/>
            <person name="Osoegawa K."/>
            <person name="Schwartz D.C."/>
            <person name="Shaw-Smith C."/>
            <person name="Stankiewicz P."/>
            <person name="Steward C."/>
            <person name="Swarbreck D."/>
            <person name="Venkataraman V."/>
            <person name="Whittaker C.A."/>
            <person name="Yang X."/>
            <person name="Zimmer A.R."/>
            <person name="Bradley A."/>
            <person name="Hubbard T."/>
            <person name="Birren B.W."/>
            <person name="Rogers J."/>
            <person name="Lander E.S."/>
            <person name="Nusbaum C."/>
        </authorList>
    </citation>
    <scope>NUCLEOTIDE SEQUENCE [LARGE SCALE GENOMIC DNA]</scope>
</reference>
<reference key="3">
    <citation type="submission" date="2005-07" db="EMBL/GenBank/DDBJ databases">
        <authorList>
            <person name="Mural R.J."/>
            <person name="Istrail S."/>
            <person name="Sutton G."/>
            <person name="Florea L."/>
            <person name="Halpern A.L."/>
            <person name="Mobarry C.M."/>
            <person name="Lippert R."/>
            <person name="Walenz B."/>
            <person name="Shatkay H."/>
            <person name="Dew I."/>
            <person name="Miller J.R."/>
            <person name="Flanigan M.J."/>
            <person name="Edwards N.J."/>
            <person name="Bolanos R."/>
            <person name="Fasulo D."/>
            <person name="Halldorsson B.V."/>
            <person name="Hannenhalli S."/>
            <person name="Turner R."/>
            <person name="Yooseph S."/>
            <person name="Lu F."/>
            <person name="Nusskern D.R."/>
            <person name="Shue B.C."/>
            <person name="Zheng X.H."/>
            <person name="Zhong F."/>
            <person name="Delcher A.L."/>
            <person name="Huson D.H."/>
            <person name="Kravitz S.A."/>
            <person name="Mouchard L."/>
            <person name="Reinert K."/>
            <person name="Remington K.A."/>
            <person name="Clark A.G."/>
            <person name="Waterman M.S."/>
            <person name="Eichler E.E."/>
            <person name="Adams M.D."/>
            <person name="Hunkapiller M.W."/>
            <person name="Myers E.W."/>
            <person name="Venter J.C."/>
        </authorList>
    </citation>
    <scope>NUCLEOTIDE SEQUENCE [LARGE SCALE GENOMIC DNA]</scope>
</reference>
<reference key="4">
    <citation type="journal article" date="2004" name="Genome Res.">
        <title>The status, quality, and expansion of the NIH full-length cDNA project: the Mammalian Gene Collection (MGC).</title>
        <authorList>
            <consortium name="The MGC Project Team"/>
        </authorList>
    </citation>
    <scope>NUCLEOTIDE SEQUENCE [LARGE SCALE MRNA] (ISOFORMS 1; 2 AND 3)</scope>
    <source>
        <tissue>Mammary gland</tissue>
        <tissue>Urinary bladder</tissue>
    </source>
</reference>
<evidence type="ECO:0000255" key="1">
    <source>
        <dbReference type="PROSITE-ProRule" id="PRU00163"/>
    </source>
</evidence>
<evidence type="ECO:0000256" key="2">
    <source>
        <dbReference type="SAM" id="MobiDB-lite"/>
    </source>
</evidence>
<evidence type="ECO:0000303" key="3">
    <source>
    </source>
</evidence>
<evidence type="ECO:0000305" key="4"/>
<keyword id="KW-0025">Alternative splicing</keyword>
<keyword id="KW-0343">GTPase activation</keyword>
<keyword id="KW-1267">Proteomics identification</keyword>
<keyword id="KW-1185">Reference proteome</keyword>
<comment type="function">
    <text>May act as a GTPase-activating protein for Rab family protein(s).</text>
</comment>
<comment type="alternative products">
    <event type="alternative splicing"/>
    <isoform>
        <id>Q8TBP0-1</id>
        <name>1</name>
        <sequence type="displayed"/>
    </isoform>
    <isoform>
        <id>Q8TBP0-2</id>
        <name>2</name>
        <sequence type="described" ref="VSP_053995 VSP_053996"/>
    </isoform>
    <isoform>
        <id>Q8TBP0-3</id>
        <name>3</name>
        <sequence type="described" ref="VSP_055665 VSP_055668"/>
    </isoform>
    <isoform>
        <id>Q8TBP0-4</id>
        <name>4</name>
        <sequence type="described" ref="VSP_055666 VSP_055667"/>
    </isoform>
</comment>
<comment type="sequence caution" evidence="4">
    <conflict type="erroneous initiation">
        <sequence resource="EMBL-CDS" id="AAH01525"/>
    </conflict>
    <text>Extended N-terminus.</text>
</comment>
<gene>
    <name type="primary">TBC1D16</name>
</gene>
<proteinExistence type="evidence at protein level"/>
<protein>
    <recommendedName>
        <fullName>TBC1 domain family member 16</fullName>
    </recommendedName>
</protein>
<accession>Q8TBP0</accession>
<accession>B9A6L7</accession>
<accession>I3L1E0</accession>
<accession>I3L4U2</accession>
<accession>Q8N3Z4</accession>
<accession>Q96DH7</accession>